<dbReference type="EMBL" id="CP000435">
    <property type="protein sequence ID" value="ABI45343.1"/>
    <property type="molecule type" value="Genomic_DNA"/>
</dbReference>
<dbReference type="RefSeq" id="WP_011620134.1">
    <property type="nucleotide sequence ID" value="NC_008319.1"/>
</dbReference>
<dbReference type="SMR" id="Q0I800"/>
<dbReference type="STRING" id="64471.sync_2224"/>
<dbReference type="KEGG" id="syg:sync_2224"/>
<dbReference type="eggNOG" id="COG0211">
    <property type="taxonomic scope" value="Bacteria"/>
</dbReference>
<dbReference type="HOGENOM" id="CLU_095424_4_0_3"/>
<dbReference type="OrthoDB" id="9803474at2"/>
<dbReference type="Proteomes" id="UP000001961">
    <property type="component" value="Chromosome"/>
</dbReference>
<dbReference type="GO" id="GO:0022625">
    <property type="term" value="C:cytosolic large ribosomal subunit"/>
    <property type="evidence" value="ECO:0007669"/>
    <property type="project" value="TreeGrafter"/>
</dbReference>
<dbReference type="GO" id="GO:0003735">
    <property type="term" value="F:structural constituent of ribosome"/>
    <property type="evidence" value="ECO:0007669"/>
    <property type="project" value="InterPro"/>
</dbReference>
<dbReference type="GO" id="GO:0006412">
    <property type="term" value="P:translation"/>
    <property type="evidence" value="ECO:0007669"/>
    <property type="project" value="UniProtKB-UniRule"/>
</dbReference>
<dbReference type="FunFam" id="2.40.50.100:FF:000004">
    <property type="entry name" value="50S ribosomal protein L27"/>
    <property type="match status" value="1"/>
</dbReference>
<dbReference type="Gene3D" id="2.40.50.100">
    <property type="match status" value="1"/>
</dbReference>
<dbReference type="HAMAP" id="MF_00539">
    <property type="entry name" value="Ribosomal_bL27"/>
    <property type="match status" value="1"/>
</dbReference>
<dbReference type="InterPro" id="IPR001684">
    <property type="entry name" value="Ribosomal_bL27"/>
</dbReference>
<dbReference type="InterPro" id="IPR018261">
    <property type="entry name" value="Ribosomal_bL27_CS"/>
</dbReference>
<dbReference type="NCBIfam" id="TIGR00062">
    <property type="entry name" value="L27"/>
    <property type="match status" value="1"/>
</dbReference>
<dbReference type="PANTHER" id="PTHR15893:SF0">
    <property type="entry name" value="LARGE RIBOSOMAL SUBUNIT PROTEIN BL27M"/>
    <property type="match status" value="1"/>
</dbReference>
<dbReference type="PANTHER" id="PTHR15893">
    <property type="entry name" value="RIBOSOMAL PROTEIN L27"/>
    <property type="match status" value="1"/>
</dbReference>
<dbReference type="Pfam" id="PF01016">
    <property type="entry name" value="Ribosomal_L27"/>
    <property type="match status" value="1"/>
</dbReference>
<dbReference type="PRINTS" id="PR00063">
    <property type="entry name" value="RIBOSOMALL27"/>
</dbReference>
<dbReference type="SUPFAM" id="SSF110324">
    <property type="entry name" value="Ribosomal L27 protein-like"/>
    <property type="match status" value="1"/>
</dbReference>
<dbReference type="PROSITE" id="PS00831">
    <property type="entry name" value="RIBOSOMAL_L27"/>
    <property type="match status" value="1"/>
</dbReference>
<organism>
    <name type="scientific">Synechococcus sp. (strain CC9311)</name>
    <dbReference type="NCBI Taxonomy" id="64471"/>
    <lineage>
        <taxon>Bacteria</taxon>
        <taxon>Bacillati</taxon>
        <taxon>Cyanobacteriota</taxon>
        <taxon>Cyanophyceae</taxon>
        <taxon>Synechococcales</taxon>
        <taxon>Synechococcaceae</taxon>
        <taxon>Synechococcus</taxon>
    </lineage>
</organism>
<reference key="1">
    <citation type="journal article" date="2006" name="Proc. Natl. Acad. Sci. U.S.A.">
        <title>Genome sequence of Synechococcus CC9311: insights into adaptation to a coastal environment.</title>
        <authorList>
            <person name="Palenik B."/>
            <person name="Ren Q."/>
            <person name="Dupont C.L."/>
            <person name="Myers G.S."/>
            <person name="Heidelberg J.F."/>
            <person name="Badger J.H."/>
            <person name="Madupu R."/>
            <person name="Nelson W.C."/>
            <person name="Brinkac L.M."/>
            <person name="Dodson R.J."/>
            <person name="Durkin A.S."/>
            <person name="Daugherty S.C."/>
            <person name="Sullivan S.A."/>
            <person name="Khouri H."/>
            <person name="Mohamoud Y."/>
            <person name="Halpin R."/>
            <person name="Paulsen I.T."/>
        </authorList>
    </citation>
    <scope>NUCLEOTIDE SEQUENCE [LARGE SCALE GENOMIC DNA]</scope>
    <source>
        <strain>CC9311</strain>
    </source>
</reference>
<evidence type="ECO:0000255" key="1">
    <source>
        <dbReference type="HAMAP-Rule" id="MF_00539"/>
    </source>
</evidence>
<evidence type="ECO:0000256" key="2">
    <source>
        <dbReference type="SAM" id="MobiDB-lite"/>
    </source>
</evidence>
<evidence type="ECO:0000305" key="3"/>
<sequence>MAHKKGTGSTRNGRDSNSKRLGVKAYGGESVTAGSILIRQRGTSVMPGVNVGRGKDDTLFALTDGIVKFESIRRGLRNRKRITVAAAE</sequence>
<comment type="similarity">
    <text evidence="1">Belongs to the bacterial ribosomal protein bL27 family.</text>
</comment>
<keyword id="KW-1185">Reference proteome</keyword>
<keyword id="KW-0687">Ribonucleoprotein</keyword>
<keyword id="KW-0689">Ribosomal protein</keyword>
<gene>
    <name evidence="1" type="primary">rpmA</name>
    <name evidence="1" type="synonym">rpl27</name>
    <name type="ordered locus">sync_2224</name>
</gene>
<protein>
    <recommendedName>
        <fullName evidence="1">Large ribosomal subunit protein bL27</fullName>
    </recommendedName>
    <alternativeName>
        <fullName evidence="3">50S ribosomal protein L27</fullName>
    </alternativeName>
</protein>
<feature type="chain" id="PRO_1000017634" description="Large ribosomal subunit protein bL27">
    <location>
        <begin position="1"/>
        <end position="88"/>
    </location>
</feature>
<feature type="region of interest" description="Disordered" evidence="2">
    <location>
        <begin position="1"/>
        <end position="24"/>
    </location>
</feature>
<accession>Q0I800</accession>
<name>RL27_SYNS3</name>
<proteinExistence type="inferred from homology"/>